<feature type="chain" id="PRO_0000062719" description="Peptidoglycan glycosyltransferase MrdB">
    <location>
        <begin position="1"/>
        <end position="381"/>
    </location>
</feature>
<feature type="transmembrane region" description="Helical" evidence="1">
    <location>
        <begin position="11"/>
        <end position="31"/>
    </location>
</feature>
<feature type="transmembrane region" description="Helical" evidence="1">
    <location>
        <begin position="40"/>
        <end position="60"/>
    </location>
</feature>
<feature type="transmembrane region" description="Helical" evidence="1">
    <location>
        <begin position="66"/>
        <end position="86"/>
    </location>
</feature>
<feature type="transmembrane region" description="Helical" evidence="1">
    <location>
        <begin position="102"/>
        <end position="122"/>
    </location>
</feature>
<feature type="transmembrane region" description="Helical" evidence="1">
    <location>
        <begin position="132"/>
        <end position="152"/>
    </location>
</feature>
<feature type="transmembrane region" description="Helical" evidence="1">
    <location>
        <begin position="156"/>
        <end position="176"/>
    </location>
</feature>
<feature type="transmembrane region" description="Helical" evidence="1">
    <location>
        <begin position="180"/>
        <end position="200"/>
    </location>
</feature>
<feature type="transmembrane region" description="Helical" evidence="1">
    <location>
        <begin position="263"/>
        <end position="283"/>
    </location>
</feature>
<feature type="transmembrane region" description="Helical" evidence="1">
    <location>
        <begin position="297"/>
        <end position="317"/>
    </location>
</feature>
<feature type="transmembrane region" description="Helical" evidence="1">
    <location>
        <begin position="328"/>
        <end position="348"/>
    </location>
</feature>
<evidence type="ECO:0000255" key="1">
    <source>
        <dbReference type="HAMAP-Rule" id="MF_02079"/>
    </source>
</evidence>
<comment type="function">
    <text evidence="1">Peptidoglycan polymerase that is essential for cell wall elongation.</text>
</comment>
<comment type="catalytic activity">
    <reaction evidence="1">
        <text>[GlcNAc-(1-&gt;4)-Mur2Ac(oyl-L-Ala-gamma-D-Glu-L-Lys-D-Ala-D-Ala)](n)-di-trans,octa-cis-undecaprenyl diphosphate + beta-D-GlcNAc-(1-&gt;4)-Mur2Ac(oyl-L-Ala-gamma-D-Glu-L-Lys-D-Ala-D-Ala)-di-trans,octa-cis-undecaprenyl diphosphate = [GlcNAc-(1-&gt;4)-Mur2Ac(oyl-L-Ala-gamma-D-Glu-L-Lys-D-Ala-D-Ala)](n+1)-di-trans,octa-cis-undecaprenyl diphosphate + di-trans,octa-cis-undecaprenyl diphosphate + H(+)</text>
        <dbReference type="Rhea" id="RHEA:23708"/>
        <dbReference type="Rhea" id="RHEA-COMP:9602"/>
        <dbReference type="Rhea" id="RHEA-COMP:9603"/>
        <dbReference type="ChEBI" id="CHEBI:15378"/>
        <dbReference type="ChEBI" id="CHEBI:58405"/>
        <dbReference type="ChEBI" id="CHEBI:60033"/>
        <dbReference type="ChEBI" id="CHEBI:78435"/>
        <dbReference type="EC" id="2.4.99.28"/>
    </reaction>
</comment>
<comment type="pathway">
    <text evidence="1">Cell wall biogenesis; peptidoglycan biosynthesis.</text>
</comment>
<comment type="subcellular location">
    <subcellularLocation>
        <location evidence="1">Cell inner membrane</location>
        <topology evidence="1">Multi-pass membrane protein</topology>
    </subcellularLocation>
</comment>
<comment type="similarity">
    <text evidence="1">Belongs to the SEDS family. MrdB/RodA subfamily.</text>
</comment>
<organism>
    <name type="scientific">Helicobacter pylori (strain J99 / ATCC 700824)</name>
    <name type="common">Campylobacter pylori J99</name>
    <dbReference type="NCBI Taxonomy" id="85963"/>
    <lineage>
        <taxon>Bacteria</taxon>
        <taxon>Pseudomonadati</taxon>
        <taxon>Campylobacterota</taxon>
        <taxon>Epsilonproteobacteria</taxon>
        <taxon>Campylobacterales</taxon>
        <taxon>Helicobacteraceae</taxon>
        <taxon>Helicobacter</taxon>
    </lineage>
</organism>
<reference key="1">
    <citation type="journal article" date="1999" name="Nature">
        <title>Genomic sequence comparison of two unrelated isolates of the human gastric pathogen Helicobacter pylori.</title>
        <authorList>
            <person name="Alm R.A."/>
            <person name="Ling L.-S.L."/>
            <person name="Moir D.T."/>
            <person name="King B.L."/>
            <person name="Brown E.D."/>
            <person name="Doig P.C."/>
            <person name="Smith D.R."/>
            <person name="Noonan B."/>
            <person name="Guild B.C."/>
            <person name="deJonge B.L."/>
            <person name="Carmel G."/>
            <person name="Tummino P.J."/>
            <person name="Caruso A."/>
            <person name="Uria-Nickelsen M."/>
            <person name="Mills D.M."/>
            <person name="Ives C."/>
            <person name="Gibson R."/>
            <person name="Merberg D."/>
            <person name="Mills S.D."/>
            <person name="Jiang Q."/>
            <person name="Taylor D.E."/>
            <person name="Vovis G.F."/>
            <person name="Trust T.J."/>
        </authorList>
    </citation>
    <scope>NUCLEOTIDE SEQUENCE [LARGE SCALE GENOMIC DNA]</scope>
    <source>
        <strain>J99 / ATCC 700824</strain>
    </source>
</reference>
<keyword id="KW-0997">Cell inner membrane</keyword>
<keyword id="KW-1003">Cell membrane</keyword>
<keyword id="KW-0133">Cell shape</keyword>
<keyword id="KW-0961">Cell wall biogenesis/degradation</keyword>
<keyword id="KW-0328">Glycosyltransferase</keyword>
<keyword id="KW-0472">Membrane</keyword>
<keyword id="KW-0573">Peptidoglycan synthesis</keyword>
<keyword id="KW-0808">Transferase</keyword>
<keyword id="KW-0812">Transmembrane</keyword>
<keyword id="KW-1133">Transmembrane helix</keyword>
<accession>Q9ZLA0</accession>
<proteinExistence type="inferred from homology"/>
<protein>
    <recommendedName>
        <fullName evidence="1">Peptidoglycan glycosyltransferase MrdB</fullName>
        <shortName evidence="1">PGT</shortName>
        <ecNumber evidence="1">2.4.99.28</ecNumber>
    </recommendedName>
    <alternativeName>
        <fullName evidence="1">Cell elongation protein RodA</fullName>
    </alternativeName>
    <alternativeName>
        <fullName evidence="1">Cell wall polymerase</fullName>
    </alternativeName>
    <alternativeName>
        <fullName evidence="1">Peptidoglycan polymerase</fullName>
        <shortName evidence="1">PG polymerase</shortName>
    </alternativeName>
</protein>
<gene>
    <name evidence="1" type="primary">mrdB</name>
    <name type="synonym">rodA</name>
    <name type="ordered locus">jhp_0680</name>
</gene>
<dbReference type="EC" id="2.4.99.28" evidence="1"/>
<dbReference type="EMBL" id="AE001439">
    <property type="protein sequence ID" value="AAD06247.1"/>
    <property type="molecule type" value="Genomic_DNA"/>
</dbReference>
<dbReference type="PIR" id="F71903">
    <property type="entry name" value="F71903"/>
</dbReference>
<dbReference type="RefSeq" id="WP_010882548.1">
    <property type="nucleotide sequence ID" value="NC_000921.1"/>
</dbReference>
<dbReference type="SMR" id="Q9ZLA0"/>
<dbReference type="KEGG" id="hpj:jhp_0680"/>
<dbReference type="eggNOG" id="COG0772">
    <property type="taxonomic scope" value="Bacteria"/>
</dbReference>
<dbReference type="UniPathway" id="UPA00219"/>
<dbReference type="Proteomes" id="UP000000804">
    <property type="component" value="Chromosome"/>
</dbReference>
<dbReference type="GO" id="GO:0032153">
    <property type="term" value="C:cell division site"/>
    <property type="evidence" value="ECO:0007669"/>
    <property type="project" value="TreeGrafter"/>
</dbReference>
<dbReference type="GO" id="GO:0005886">
    <property type="term" value="C:plasma membrane"/>
    <property type="evidence" value="ECO:0007669"/>
    <property type="project" value="UniProtKB-SubCell"/>
</dbReference>
<dbReference type="GO" id="GO:0015648">
    <property type="term" value="F:lipid-linked peptidoglycan transporter activity"/>
    <property type="evidence" value="ECO:0007669"/>
    <property type="project" value="TreeGrafter"/>
</dbReference>
<dbReference type="GO" id="GO:0008955">
    <property type="term" value="F:peptidoglycan glycosyltransferase activity"/>
    <property type="evidence" value="ECO:0007669"/>
    <property type="project" value="UniProtKB-UniRule"/>
</dbReference>
<dbReference type="GO" id="GO:0051301">
    <property type="term" value="P:cell division"/>
    <property type="evidence" value="ECO:0007669"/>
    <property type="project" value="InterPro"/>
</dbReference>
<dbReference type="GO" id="GO:0071555">
    <property type="term" value="P:cell wall organization"/>
    <property type="evidence" value="ECO:0007669"/>
    <property type="project" value="UniProtKB-KW"/>
</dbReference>
<dbReference type="GO" id="GO:0009252">
    <property type="term" value="P:peptidoglycan biosynthetic process"/>
    <property type="evidence" value="ECO:0007669"/>
    <property type="project" value="UniProtKB-UniRule"/>
</dbReference>
<dbReference type="GO" id="GO:0008360">
    <property type="term" value="P:regulation of cell shape"/>
    <property type="evidence" value="ECO:0007669"/>
    <property type="project" value="UniProtKB-KW"/>
</dbReference>
<dbReference type="HAMAP" id="MF_02079">
    <property type="entry name" value="PGT_RodA"/>
    <property type="match status" value="1"/>
</dbReference>
<dbReference type="InterPro" id="IPR018365">
    <property type="entry name" value="Cell_cycle_FtsW-rel_CS"/>
</dbReference>
<dbReference type="InterPro" id="IPR001182">
    <property type="entry name" value="FtsW/RodA"/>
</dbReference>
<dbReference type="InterPro" id="IPR011923">
    <property type="entry name" value="RodA/MrdB"/>
</dbReference>
<dbReference type="PANTHER" id="PTHR30474">
    <property type="entry name" value="CELL CYCLE PROTEIN"/>
    <property type="match status" value="1"/>
</dbReference>
<dbReference type="PANTHER" id="PTHR30474:SF1">
    <property type="entry name" value="PEPTIDOGLYCAN GLYCOSYLTRANSFERASE MRDB"/>
    <property type="match status" value="1"/>
</dbReference>
<dbReference type="Pfam" id="PF01098">
    <property type="entry name" value="FTSW_RODA_SPOVE"/>
    <property type="match status" value="1"/>
</dbReference>
<dbReference type="PROSITE" id="PS00428">
    <property type="entry name" value="FTSW_RODA_SPOVE"/>
    <property type="match status" value="1"/>
</dbReference>
<sequence>MALDKRIWMHFDLLPFVFIIPLLVVSFLLIFESSAVLSLKQGVYYAIGFLLFWVVFFIPFRKLDRWLFALYWACVILLALVDFMGSSKLGAQRWLVIPFTSITLQPSEPVKIAILLLLAHLIKINPPPFKGYDWGMFLKLSFYICLPAALILKQPDLGTALIVLIMGFGILLIVGLRTRVWLPLLIALIVASPIAYHFLHDYQKKRIADFLSEKPNYHVMQSIIAIGSGGFLGKSKEACTQTKFKFLPIATSDFIFAYFVERFGFLGAILLFAIYIGLSLHLFFYLFESNSDWFLKIVALGISILIFVYSSVNIAMTLGLAPVVGIPLPLFSYGGSSFITFMILFAILENLLAFRYIFGNNSKPSFGNFGFLAQLVRALGS</sequence>
<name>RODA_HELPJ</name>